<proteinExistence type="inferred from homology"/>
<accession>Q1RI36</accession>
<keyword id="KW-0067">ATP-binding</keyword>
<keyword id="KW-0997">Cell inner membrane</keyword>
<keyword id="KW-1003">Cell membrane</keyword>
<keyword id="KW-0963">Cytoplasm</keyword>
<keyword id="KW-0472">Membrane</keyword>
<keyword id="KW-0479">Metal-binding</keyword>
<keyword id="KW-0547">Nucleotide-binding</keyword>
<keyword id="KW-0653">Protein transport</keyword>
<keyword id="KW-1278">Translocase</keyword>
<keyword id="KW-0811">Translocation</keyword>
<keyword id="KW-0813">Transport</keyword>
<keyword id="KW-0862">Zinc</keyword>
<sequence length="910" mass="103716">MFSILKKIFGTANDRTIKKLFSDIAKINSLEPAIQKLSDEELKNKTVEFKKKLKNGATLDDIAYEAFAVVREASRRVYGMRHFDVQLIGGLVLHRGMITEMRTGEGKTLVATLPAYLNALAEKGVHVVTVNDYLVSRDSASMGKIYNFLGLSVGCIVAGMTDEAKREAYNSDITYATNNELGFDYLRDNMKYSLQERVLRPFNFAIIDEVDSILIDEARTPLVISGPVNDNSELYGKVDKLVRMLNVSDFEKDEKLKTINLTESGISHVESLLSQADIIKPNSGLYDFENLSLVHYVNQALRAHNMFMIDVDYLVRDGKVMIIDEFTGRVMEGRRYSEGLHQALEAKENVKIQNENQTLASITFQNYFRNYPKLSGMTGTAMTEAPELKDIYNLDVVAVPTHNKVTRRDLDDEIYGSKKEKYDAILKLIKDCYDRGQPVLVGTVSIEKSEEISNVLNKNKIPHKVLNAKFHEQEAFIIAQAGRFKAVTIATNMAGRGTDIMLGGNPEMLIEQIDRKSLTNAAYKEKVNEIKAQTAEEKKQVIAAGGLFVIGTERHESRRIDNQLRGRSGRQGDPGNTKFFLSLDDDLMRIFASERISGVLRTLGLKDGEAIHHPMISRSLEKAQQKVEGHNYEIRKNLLRFDDVMNDQRKIIYEQRTEIIKSKDSYDFLSSTTEELAKKIVLTFMPAGSYREDWDIENLSVELHRTFAIKLDQNLISKNDVTEEEVTKIVIQTADSIYKSKEEAYSPDLMHNAVKYILLTTLDQVWKDHLHSLDHLRQGISLRAYAQKDPLSEYKREAFNLFEHMLNNLKELFIQTVYHFHIDLKHIQKEDISLENKKLQNNMHESREDPAFSKYNAGSNLETDLRPVISRINPEDRDPKNPTSWGKVSRNELCPCGSGKKYKYCHGLNE</sequence>
<comment type="function">
    <text evidence="1">Part of the Sec protein translocase complex. Interacts with the SecYEG preprotein conducting channel. Has a central role in coupling the hydrolysis of ATP to the transfer of proteins into and across the cell membrane, serving both as a receptor for the preprotein-SecB complex and as an ATP-driven molecular motor driving the stepwise translocation of polypeptide chains across the membrane.</text>
</comment>
<comment type="catalytic activity">
    <reaction evidence="1">
        <text>ATP + H2O + cellular proteinSide 1 = ADP + phosphate + cellular proteinSide 2.</text>
        <dbReference type="EC" id="7.4.2.8"/>
    </reaction>
</comment>
<comment type="cofactor">
    <cofactor evidence="1">
        <name>Zn(2+)</name>
        <dbReference type="ChEBI" id="CHEBI:29105"/>
    </cofactor>
    <text evidence="1">May bind 1 zinc ion per subunit.</text>
</comment>
<comment type="subunit">
    <text evidence="1">Monomer and homodimer. Part of the essential Sec protein translocation apparatus which comprises SecA, SecYEG and auxiliary proteins SecDF-YajC and YidC.</text>
</comment>
<comment type="subcellular location">
    <subcellularLocation>
        <location evidence="1">Cell inner membrane</location>
        <topology evidence="1">Peripheral membrane protein</topology>
        <orientation evidence="1">Cytoplasmic side</orientation>
    </subcellularLocation>
    <subcellularLocation>
        <location evidence="1">Cytoplasm</location>
    </subcellularLocation>
    <text evidence="1">Distribution is 50-50.</text>
</comment>
<comment type="similarity">
    <text evidence="1">Belongs to the SecA family.</text>
</comment>
<reference key="1">
    <citation type="journal article" date="2006" name="PLoS Genet.">
        <title>Genome sequence of Rickettsia bellii illuminates the role of amoebae in gene exchanges between intracellular pathogens.</title>
        <authorList>
            <person name="Ogata H."/>
            <person name="La Scola B."/>
            <person name="Audic S."/>
            <person name="Renesto P."/>
            <person name="Blanc G."/>
            <person name="Robert C."/>
            <person name="Fournier P.-E."/>
            <person name="Claverie J.-M."/>
            <person name="Raoult D."/>
        </authorList>
    </citation>
    <scope>NUCLEOTIDE SEQUENCE [LARGE SCALE GENOMIC DNA]</scope>
    <source>
        <strain>RML369-C</strain>
    </source>
</reference>
<feature type="chain" id="PRO_0000277299" description="Protein translocase subunit SecA">
    <location>
        <begin position="1"/>
        <end position="910"/>
    </location>
</feature>
<feature type="binding site" evidence="1">
    <location>
        <position position="86"/>
    </location>
    <ligand>
        <name>ATP</name>
        <dbReference type="ChEBI" id="CHEBI:30616"/>
    </ligand>
</feature>
<feature type="binding site" evidence="1">
    <location>
        <begin position="104"/>
        <end position="108"/>
    </location>
    <ligand>
        <name>ATP</name>
        <dbReference type="ChEBI" id="CHEBI:30616"/>
    </ligand>
</feature>
<feature type="binding site" evidence="1">
    <location>
        <position position="499"/>
    </location>
    <ligand>
        <name>ATP</name>
        <dbReference type="ChEBI" id="CHEBI:30616"/>
    </ligand>
</feature>
<feature type="binding site" evidence="1">
    <location>
        <position position="894"/>
    </location>
    <ligand>
        <name>Zn(2+)</name>
        <dbReference type="ChEBI" id="CHEBI:29105"/>
    </ligand>
</feature>
<feature type="binding site" evidence="1">
    <location>
        <position position="896"/>
    </location>
    <ligand>
        <name>Zn(2+)</name>
        <dbReference type="ChEBI" id="CHEBI:29105"/>
    </ligand>
</feature>
<feature type="binding site" evidence="1">
    <location>
        <position position="905"/>
    </location>
    <ligand>
        <name>Zn(2+)</name>
        <dbReference type="ChEBI" id="CHEBI:29105"/>
    </ligand>
</feature>
<feature type="binding site" evidence="1">
    <location>
        <position position="906"/>
    </location>
    <ligand>
        <name>Zn(2+)</name>
        <dbReference type="ChEBI" id="CHEBI:29105"/>
    </ligand>
</feature>
<name>SECA_RICBR</name>
<protein>
    <recommendedName>
        <fullName evidence="1">Protein translocase subunit SecA</fullName>
        <ecNumber evidence="1">7.4.2.8</ecNumber>
    </recommendedName>
</protein>
<dbReference type="EC" id="7.4.2.8" evidence="1"/>
<dbReference type="EMBL" id="CP000087">
    <property type="protein sequence ID" value="ABE04978.1"/>
    <property type="molecule type" value="Genomic_DNA"/>
</dbReference>
<dbReference type="RefSeq" id="WP_011477563.1">
    <property type="nucleotide sequence ID" value="NC_007940.1"/>
</dbReference>
<dbReference type="SMR" id="Q1RI36"/>
<dbReference type="KEGG" id="rbe:RBE_0897"/>
<dbReference type="eggNOG" id="COG0653">
    <property type="taxonomic scope" value="Bacteria"/>
</dbReference>
<dbReference type="HOGENOM" id="CLU_005314_3_0_5"/>
<dbReference type="OrthoDB" id="9805579at2"/>
<dbReference type="Proteomes" id="UP000001951">
    <property type="component" value="Chromosome"/>
</dbReference>
<dbReference type="GO" id="GO:0031522">
    <property type="term" value="C:cell envelope Sec protein transport complex"/>
    <property type="evidence" value="ECO:0007669"/>
    <property type="project" value="TreeGrafter"/>
</dbReference>
<dbReference type="GO" id="GO:0005829">
    <property type="term" value="C:cytosol"/>
    <property type="evidence" value="ECO:0007669"/>
    <property type="project" value="TreeGrafter"/>
</dbReference>
<dbReference type="GO" id="GO:0005886">
    <property type="term" value="C:plasma membrane"/>
    <property type="evidence" value="ECO:0007669"/>
    <property type="project" value="UniProtKB-SubCell"/>
</dbReference>
<dbReference type="GO" id="GO:0005524">
    <property type="term" value="F:ATP binding"/>
    <property type="evidence" value="ECO:0007669"/>
    <property type="project" value="UniProtKB-UniRule"/>
</dbReference>
<dbReference type="GO" id="GO:0046872">
    <property type="term" value="F:metal ion binding"/>
    <property type="evidence" value="ECO:0007669"/>
    <property type="project" value="UniProtKB-KW"/>
</dbReference>
<dbReference type="GO" id="GO:0008564">
    <property type="term" value="F:protein-exporting ATPase activity"/>
    <property type="evidence" value="ECO:0007669"/>
    <property type="project" value="UniProtKB-EC"/>
</dbReference>
<dbReference type="GO" id="GO:0065002">
    <property type="term" value="P:intracellular protein transmembrane transport"/>
    <property type="evidence" value="ECO:0007669"/>
    <property type="project" value="UniProtKB-UniRule"/>
</dbReference>
<dbReference type="GO" id="GO:0017038">
    <property type="term" value="P:protein import"/>
    <property type="evidence" value="ECO:0007669"/>
    <property type="project" value="InterPro"/>
</dbReference>
<dbReference type="GO" id="GO:0006605">
    <property type="term" value="P:protein targeting"/>
    <property type="evidence" value="ECO:0007669"/>
    <property type="project" value="UniProtKB-UniRule"/>
</dbReference>
<dbReference type="GO" id="GO:0043952">
    <property type="term" value="P:protein transport by the Sec complex"/>
    <property type="evidence" value="ECO:0007669"/>
    <property type="project" value="TreeGrafter"/>
</dbReference>
<dbReference type="CDD" id="cd17928">
    <property type="entry name" value="DEXDc_SecA"/>
    <property type="match status" value="1"/>
</dbReference>
<dbReference type="CDD" id="cd18803">
    <property type="entry name" value="SF2_C_secA"/>
    <property type="match status" value="1"/>
</dbReference>
<dbReference type="FunFam" id="3.40.50.300:FF:000113">
    <property type="entry name" value="Preprotein translocase subunit SecA"/>
    <property type="match status" value="1"/>
</dbReference>
<dbReference type="FunFam" id="3.90.1440.10:FF:000001">
    <property type="entry name" value="Preprotein translocase subunit SecA"/>
    <property type="match status" value="1"/>
</dbReference>
<dbReference type="FunFam" id="1.10.3060.10:FF:000003">
    <property type="entry name" value="Protein translocase subunit SecA"/>
    <property type="match status" value="1"/>
</dbReference>
<dbReference type="FunFam" id="3.40.50.300:FF:000334">
    <property type="entry name" value="Protein translocase subunit SecA"/>
    <property type="match status" value="1"/>
</dbReference>
<dbReference type="Gene3D" id="1.10.3060.10">
    <property type="entry name" value="Helical scaffold and wing domains of SecA"/>
    <property type="match status" value="1"/>
</dbReference>
<dbReference type="Gene3D" id="3.40.50.300">
    <property type="entry name" value="P-loop containing nucleotide triphosphate hydrolases"/>
    <property type="match status" value="2"/>
</dbReference>
<dbReference type="Gene3D" id="3.90.1440.10">
    <property type="entry name" value="SecA, preprotein cross-linking domain"/>
    <property type="match status" value="1"/>
</dbReference>
<dbReference type="HAMAP" id="MF_01382">
    <property type="entry name" value="SecA"/>
    <property type="match status" value="1"/>
</dbReference>
<dbReference type="InterPro" id="IPR014001">
    <property type="entry name" value="Helicase_ATP-bd"/>
</dbReference>
<dbReference type="InterPro" id="IPR027417">
    <property type="entry name" value="P-loop_NTPase"/>
</dbReference>
<dbReference type="InterPro" id="IPR004027">
    <property type="entry name" value="SEC_C_motif"/>
</dbReference>
<dbReference type="InterPro" id="IPR000185">
    <property type="entry name" value="SecA"/>
</dbReference>
<dbReference type="InterPro" id="IPR020937">
    <property type="entry name" value="SecA_CS"/>
</dbReference>
<dbReference type="InterPro" id="IPR011115">
    <property type="entry name" value="SecA_DEAD"/>
</dbReference>
<dbReference type="InterPro" id="IPR014018">
    <property type="entry name" value="SecA_motor_DEAD"/>
</dbReference>
<dbReference type="InterPro" id="IPR011130">
    <property type="entry name" value="SecA_preprotein_X-link_dom"/>
</dbReference>
<dbReference type="InterPro" id="IPR044722">
    <property type="entry name" value="SecA_SF2_C"/>
</dbReference>
<dbReference type="InterPro" id="IPR011116">
    <property type="entry name" value="SecA_Wing/Scaffold"/>
</dbReference>
<dbReference type="InterPro" id="IPR036266">
    <property type="entry name" value="SecA_Wing/Scaffold_sf"/>
</dbReference>
<dbReference type="InterPro" id="IPR036670">
    <property type="entry name" value="SecA_X-link_sf"/>
</dbReference>
<dbReference type="NCBIfam" id="NF009538">
    <property type="entry name" value="PRK12904.1"/>
    <property type="match status" value="1"/>
</dbReference>
<dbReference type="NCBIfam" id="TIGR00963">
    <property type="entry name" value="secA"/>
    <property type="match status" value="1"/>
</dbReference>
<dbReference type="PANTHER" id="PTHR30612:SF0">
    <property type="entry name" value="CHLOROPLAST PROTEIN-TRANSPORTING ATPASE"/>
    <property type="match status" value="1"/>
</dbReference>
<dbReference type="PANTHER" id="PTHR30612">
    <property type="entry name" value="SECA INNER MEMBRANE COMPONENT OF SEC PROTEIN SECRETION SYSTEM"/>
    <property type="match status" value="1"/>
</dbReference>
<dbReference type="Pfam" id="PF21090">
    <property type="entry name" value="P-loop_SecA"/>
    <property type="match status" value="1"/>
</dbReference>
<dbReference type="Pfam" id="PF02810">
    <property type="entry name" value="SEC-C"/>
    <property type="match status" value="1"/>
</dbReference>
<dbReference type="Pfam" id="PF07517">
    <property type="entry name" value="SecA_DEAD"/>
    <property type="match status" value="1"/>
</dbReference>
<dbReference type="Pfam" id="PF01043">
    <property type="entry name" value="SecA_PP_bind"/>
    <property type="match status" value="1"/>
</dbReference>
<dbReference type="Pfam" id="PF07516">
    <property type="entry name" value="SecA_SW"/>
    <property type="match status" value="1"/>
</dbReference>
<dbReference type="PRINTS" id="PR00906">
    <property type="entry name" value="SECA"/>
</dbReference>
<dbReference type="SMART" id="SM00957">
    <property type="entry name" value="SecA_DEAD"/>
    <property type="match status" value="1"/>
</dbReference>
<dbReference type="SMART" id="SM00958">
    <property type="entry name" value="SecA_PP_bind"/>
    <property type="match status" value="1"/>
</dbReference>
<dbReference type="SUPFAM" id="SSF81886">
    <property type="entry name" value="Helical scaffold and wing domains of SecA"/>
    <property type="match status" value="1"/>
</dbReference>
<dbReference type="SUPFAM" id="SSF52540">
    <property type="entry name" value="P-loop containing nucleoside triphosphate hydrolases"/>
    <property type="match status" value="2"/>
</dbReference>
<dbReference type="SUPFAM" id="SSF81767">
    <property type="entry name" value="Pre-protein crosslinking domain of SecA"/>
    <property type="match status" value="1"/>
</dbReference>
<dbReference type="PROSITE" id="PS01312">
    <property type="entry name" value="SECA"/>
    <property type="match status" value="1"/>
</dbReference>
<dbReference type="PROSITE" id="PS51196">
    <property type="entry name" value="SECA_MOTOR_DEAD"/>
    <property type="match status" value="1"/>
</dbReference>
<evidence type="ECO:0000255" key="1">
    <source>
        <dbReference type="HAMAP-Rule" id="MF_01382"/>
    </source>
</evidence>
<gene>
    <name evidence="1" type="primary">secA</name>
    <name type="ordered locus">RBE_0897</name>
</gene>
<organism>
    <name type="scientific">Rickettsia bellii (strain RML369-C)</name>
    <dbReference type="NCBI Taxonomy" id="336407"/>
    <lineage>
        <taxon>Bacteria</taxon>
        <taxon>Pseudomonadati</taxon>
        <taxon>Pseudomonadota</taxon>
        <taxon>Alphaproteobacteria</taxon>
        <taxon>Rickettsiales</taxon>
        <taxon>Rickettsiaceae</taxon>
        <taxon>Rickettsieae</taxon>
        <taxon>Rickettsia</taxon>
        <taxon>belli group</taxon>
    </lineage>
</organism>